<feature type="chain" id="PRO_1000009026" description="Adenylyl-sulfate kinase">
    <location>
        <begin position="1"/>
        <end position="205"/>
    </location>
</feature>
<feature type="active site" description="Phosphoserine intermediate" evidence="1">
    <location>
        <position position="105"/>
    </location>
</feature>
<feature type="binding site" evidence="1">
    <location>
        <begin position="31"/>
        <end position="38"/>
    </location>
    <ligand>
        <name>ATP</name>
        <dbReference type="ChEBI" id="CHEBI:30616"/>
    </ligand>
</feature>
<dbReference type="EC" id="2.7.1.25" evidence="1"/>
<dbReference type="EMBL" id="CP000681">
    <property type="protein sequence ID" value="ABP76753.1"/>
    <property type="molecule type" value="Genomic_DNA"/>
</dbReference>
<dbReference type="SMR" id="A4Y9X0"/>
<dbReference type="STRING" id="319224.Sputcn32_3040"/>
<dbReference type="KEGG" id="spc:Sputcn32_3040"/>
<dbReference type="eggNOG" id="COG0529">
    <property type="taxonomic scope" value="Bacteria"/>
</dbReference>
<dbReference type="HOGENOM" id="CLU_046932_1_0_6"/>
<dbReference type="UniPathway" id="UPA00140">
    <property type="reaction ID" value="UER00205"/>
</dbReference>
<dbReference type="GO" id="GO:0004020">
    <property type="term" value="F:adenylylsulfate kinase activity"/>
    <property type="evidence" value="ECO:0007669"/>
    <property type="project" value="UniProtKB-UniRule"/>
</dbReference>
<dbReference type="GO" id="GO:0005524">
    <property type="term" value="F:ATP binding"/>
    <property type="evidence" value="ECO:0007669"/>
    <property type="project" value="UniProtKB-UniRule"/>
</dbReference>
<dbReference type="GO" id="GO:0070814">
    <property type="term" value="P:hydrogen sulfide biosynthetic process"/>
    <property type="evidence" value="ECO:0007669"/>
    <property type="project" value="UniProtKB-UniRule"/>
</dbReference>
<dbReference type="GO" id="GO:0000103">
    <property type="term" value="P:sulfate assimilation"/>
    <property type="evidence" value="ECO:0007669"/>
    <property type="project" value="UniProtKB-UniRule"/>
</dbReference>
<dbReference type="CDD" id="cd02027">
    <property type="entry name" value="APSK"/>
    <property type="match status" value="1"/>
</dbReference>
<dbReference type="FunFam" id="3.40.50.300:FF:000212">
    <property type="entry name" value="Adenylyl-sulfate kinase"/>
    <property type="match status" value="1"/>
</dbReference>
<dbReference type="Gene3D" id="3.40.50.300">
    <property type="entry name" value="P-loop containing nucleotide triphosphate hydrolases"/>
    <property type="match status" value="1"/>
</dbReference>
<dbReference type="HAMAP" id="MF_00065">
    <property type="entry name" value="Adenylyl_sulf_kinase"/>
    <property type="match status" value="1"/>
</dbReference>
<dbReference type="InterPro" id="IPR002891">
    <property type="entry name" value="APS_kinase"/>
</dbReference>
<dbReference type="InterPro" id="IPR027417">
    <property type="entry name" value="P-loop_NTPase"/>
</dbReference>
<dbReference type="NCBIfam" id="TIGR00455">
    <property type="entry name" value="apsK"/>
    <property type="match status" value="1"/>
</dbReference>
<dbReference type="NCBIfam" id="NF003013">
    <property type="entry name" value="PRK03846.1"/>
    <property type="match status" value="1"/>
</dbReference>
<dbReference type="PANTHER" id="PTHR11055:SF63">
    <property type="entry name" value="ADENYLYL-SULFATE KINASE 1, CHLOROPLASTIC"/>
    <property type="match status" value="1"/>
</dbReference>
<dbReference type="PANTHER" id="PTHR11055">
    <property type="entry name" value="BIFUNCTIONAL 3'-PHOSPHOADENOSINE 5'-PHOSPHOSULFATE SYNTHASE"/>
    <property type="match status" value="1"/>
</dbReference>
<dbReference type="Pfam" id="PF01583">
    <property type="entry name" value="APS_kinase"/>
    <property type="match status" value="1"/>
</dbReference>
<dbReference type="SUPFAM" id="SSF52540">
    <property type="entry name" value="P-loop containing nucleoside triphosphate hydrolases"/>
    <property type="match status" value="1"/>
</dbReference>
<sequence length="205" mass="22336">MTNIVWHQHPVDQAARAEQKGQNPVLLWFTGLSGAGKSTLAGALERALFEAGFHTYLLDGDNVRHGLCKDLGFTVEDRDENLRRVGEVAKLMVDAGLVVLSAFISPTREERDGIRARFPAGQFIEVHVSTPLSVCEQRDPKGLYVKARSGEISNFTGISSPYEAPLAAELTIDTSKGDLATQVRALIDYLTAINVINTDKTKTVA</sequence>
<keyword id="KW-0067">ATP-binding</keyword>
<keyword id="KW-0418">Kinase</keyword>
<keyword id="KW-0547">Nucleotide-binding</keyword>
<keyword id="KW-0597">Phosphoprotein</keyword>
<keyword id="KW-0808">Transferase</keyword>
<protein>
    <recommendedName>
        <fullName evidence="1">Adenylyl-sulfate kinase</fullName>
        <ecNumber evidence="1">2.7.1.25</ecNumber>
    </recommendedName>
    <alternativeName>
        <fullName evidence="1">APS kinase</fullName>
    </alternativeName>
    <alternativeName>
        <fullName evidence="1">ATP adenosine-5'-phosphosulfate 3'-phosphotransferase</fullName>
    </alternativeName>
    <alternativeName>
        <fullName evidence="1">Adenosine-5'-phosphosulfate kinase</fullName>
    </alternativeName>
</protein>
<evidence type="ECO:0000255" key="1">
    <source>
        <dbReference type="HAMAP-Rule" id="MF_00065"/>
    </source>
</evidence>
<organism>
    <name type="scientific">Shewanella putrefaciens (strain CN-32 / ATCC BAA-453)</name>
    <dbReference type="NCBI Taxonomy" id="319224"/>
    <lineage>
        <taxon>Bacteria</taxon>
        <taxon>Pseudomonadati</taxon>
        <taxon>Pseudomonadota</taxon>
        <taxon>Gammaproteobacteria</taxon>
        <taxon>Alteromonadales</taxon>
        <taxon>Shewanellaceae</taxon>
        <taxon>Shewanella</taxon>
    </lineage>
</organism>
<proteinExistence type="inferred from homology"/>
<reference key="1">
    <citation type="submission" date="2007-04" db="EMBL/GenBank/DDBJ databases">
        <title>Complete sequence of Shewanella putrefaciens CN-32.</title>
        <authorList>
            <consortium name="US DOE Joint Genome Institute"/>
            <person name="Copeland A."/>
            <person name="Lucas S."/>
            <person name="Lapidus A."/>
            <person name="Barry K."/>
            <person name="Detter J.C."/>
            <person name="Glavina del Rio T."/>
            <person name="Hammon N."/>
            <person name="Israni S."/>
            <person name="Dalin E."/>
            <person name="Tice H."/>
            <person name="Pitluck S."/>
            <person name="Chain P."/>
            <person name="Malfatti S."/>
            <person name="Shin M."/>
            <person name="Vergez L."/>
            <person name="Schmutz J."/>
            <person name="Larimer F."/>
            <person name="Land M."/>
            <person name="Hauser L."/>
            <person name="Kyrpides N."/>
            <person name="Mikhailova N."/>
            <person name="Romine M.F."/>
            <person name="Fredrickson J."/>
            <person name="Tiedje J."/>
            <person name="Richardson P."/>
        </authorList>
    </citation>
    <scope>NUCLEOTIDE SEQUENCE [LARGE SCALE GENOMIC DNA]</scope>
    <source>
        <strain>CN-32 / ATCC BAA-453</strain>
    </source>
</reference>
<name>CYSC_SHEPC</name>
<accession>A4Y9X0</accession>
<gene>
    <name evidence="1" type="primary">cysC</name>
    <name type="ordered locus">Sputcn32_3040</name>
</gene>
<comment type="function">
    <text evidence="1">Catalyzes the synthesis of activated sulfate.</text>
</comment>
<comment type="catalytic activity">
    <reaction evidence="1">
        <text>adenosine 5'-phosphosulfate + ATP = 3'-phosphoadenylyl sulfate + ADP + H(+)</text>
        <dbReference type="Rhea" id="RHEA:24152"/>
        <dbReference type="ChEBI" id="CHEBI:15378"/>
        <dbReference type="ChEBI" id="CHEBI:30616"/>
        <dbReference type="ChEBI" id="CHEBI:58243"/>
        <dbReference type="ChEBI" id="CHEBI:58339"/>
        <dbReference type="ChEBI" id="CHEBI:456216"/>
        <dbReference type="EC" id="2.7.1.25"/>
    </reaction>
</comment>
<comment type="pathway">
    <text evidence="1">Sulfur metabolism; hydrogen sulfide biosynthesis; sulfite from sulfate: step 2/3.</text>
</comment>
<comment type="similarity">
    <text evidence="1">Belongs to the APS kinase family.</text>
</comment>